<gene>
    <name evidence="1" type="primary">ribBA</name>
    <name type="ordered locus">MAV_3365</name>
</gene>
<evidence type="ECO:0000255" key="1">
    <source>
        <dbReference type="HAMAP-Rule" id="MF_01283"/>
    </source>
</evidence>
<accession>A0QI09</accession>
<dbReference type="EC" id="4.1.99.12" evidence="1"/>
<dbReference type="EC" id="3.5.4.25" evidence="1"/>
<dbReference type="EMBL" id="CP000479">
    <property type="protein sequence ID" value="ABK67166.1"/>
    <property type="molecule type" value="Genomic_DNA"/>
</dbReference>
<dbReference type="RefSeq" id="WP_011725426.1">
    <property type="nucleotide sequence ID" value="NC_008595.1"/>
</dbReference>
<dbReference type="SMR" id="A0QI09"/>
<dbReference type="KEGG" id="mav:MAV_3365"/>
<dbReference type="HOGENOM" id="CLU_020273_1_2_11"/>
<dbReference type="UniPathway" id="UPA00275">
    <property type="reaction ID" value="UER00399"/>
</dbReference>
<dbReference type="UniPathway" id="UPA00275">
    <property type="reaction ID" value="UER00400"/>
</dbReference>
<dbReference type="Proteomes" id="UP000001574">
    <property type="component" value="Chromosome"/>
</dbReference>
<dbReference type="GO" id="GO:0005829">
    <property type="term" value="C:cytosol"/>
    <property type="evidence" value="ECO:0007669"/>
    <property type="project" value="TreeGrafter"/>
</dbReference>
<dbReference type="GO" id="GO:0008686">
    <property type="term" value="F:3,4-dihydroxy-2-butanone-4-phosphate synthase activity"/>
    <property type="evidence" value="ECO:0007669"/>
    <property type="project" value="UniProtKB-UniRule"/>
</dbReference>
<dbReference type="GO" id="GO:0005525">
    <property type="term" value="F:GTP binding"/>
    <property type="evidence" value="ECO:0007669"/>
    <property type="project" value="UniProtKB-KW"/>
</dbReference>
<dbReference type="GO" id="GO:0003935">
    <property type="term" value="F:GTP cyclohydrolase II activity"/>
    <property type="evidence" value="ECO:0007669"/>
    <property type="project" value="UniProtKB-UniRule"/>
</dbReference>
<dbReference type="GO" id="GO:0000287">
    <property type="term" value="F:magnesium ion binding"/>
    <property type="evidence" value="ECO:0007669"/>
    <property type="project" value="UniProtKB-UniRule"/>
</dbReference>
<dbReference type="GO" id="GO:0030145">
    <property type="term" value="F:manganese ion binding"/>
    <property type="evidence" value="ECO:0007669"/>
    <property type="project" value="UniProtKB-UniRule"/>
</dbReference>
<dbReference type="GO" id="GO:0008270">
    <property type="term" value="F:zinc ion binding"/>
    <property type="evidence" value="ECO:0007669"/>
    <property type="project" value="UniProtKB-UniRule"/>
</dbReference>
<dbReference type="GO" id="GO:0009231">
    <property type="term" value="P:riboflavin biosynthetic process"/>
    <property type="evidence" value="ECO:0007669"/>
    <property type="project" value="UniProtKB-UniRule"/>
</dbReference>
<dbReference type="CDD" id="cd00641">
    <property type="entry name" value="GTP_cyclohydro2"/>
    <property type="match status" value="1"/>
</dbReference>
<dbReference type="FunFam" id="3.40.50.10990:FF:000001">
    <property type="entry name" value="Riboflavin biosynthesis protein RibBA"/>
    <property type="match status" value="1"/>
</dbReference>
<dbReference type="FunFam" id="3.90.870.10:FF:000001">
    <property type="entry name" value="Riboflavin biosynthesis protein RibBA"/>
    <property type="match status" value="1"/>
</dbReference>
<dbReference type="Gene3D" id="3.90.870.10">
    <property type="entry name" value="DHBP synthase"/>
    <property type="match status" value="1"/>
</dbReference>
<dbReference type="Gene3D" id="3.40.50.10990">
    <property type="entry name" value="GTP cyclohydrolase II"/>
    <property type="match status" value="1"/>
</dbReference>
<dbReference type="HAMAP" id="MF_00179">
    <property type="entry name" value="RibA"/>
    <property type="match status" value="1"/>
</dbReference>
<dbReference type="HAMAP" id="MF_00180">
    <property type="entry name" value="RibB"/>
    <property type="match status" value="1"/>
</dbReference>
<dbReference type="HAMAP" id="MF_01283">
    <property type="entry name" value="RibBA"/>
    <property type="match status" value="1"/>
</dbReference>
<dbReference type="InterPro" id="IPR017945">
    <property type="entry name" value="DHBP_synth_RibB-like_a/b_dom"/>
</dbReference>
<dbReference type="InterPro" id="IPR000422">
    <property type="entry name" value="DHBP_synthase_RibB"/>
</dbReference>
<dbReference type="InterPro" id="IPR032677">
    <property type="entry name" value="GTP_cyclohydro_II"/>
</dbReference>
<dbReference type="InterPro" id="IPR000926">
    <property type="entry name" value="RibA"/>
</dbReference>
<dbReference type="InterPro" id="IPR036144">
    <property type="entry name" value="RibA-like_sf"/>
</dbReference>
<dbReference type="InterPro" id="IPR016299">
    <property type="entry name" value="Riboflavin_synth_RibBA"/>
</dbReference>
<dbReference type="NCBIfam" id="NF001591">
    <property type="entry name" value="PRK00393.1"/>
    <property type="match status" value="1"/>
</dbReference>
<dbReference type="NCBIfam" id="NF006803">
    <property type="entry name" value="PRK09311.1"/>
    <property type="match status" value="1"/>
</dbReference>
<dbReference type="NCBIfam" id="TIGR00505">
    <property type="entry name" value="ribA"/>
    <property type="match status" value="1"/>
</dbReference>
<dbReference type="NCBIfam" id="TIGR00506">
    <property type="entry name" value="ribB"/>
    <property type="match status" value="1"/>
</dbReference>
<dbReference type="PANTHER" id="PTHR21327:SF18">
    <property type="entry name" value="3,4-DIHYDROXY-2-BUTANONE 4-PHOSPHATE SYNTHASE"/>
    <property type="match status" value="1"/>
</dbReference>
<dbReference type="PANTHER" id="PTHR21327">
    <property type="entry name" value="GTP CYCLOHYDROLASE II-RELATED"/>
    <property type="match status" value="1"/>
</dbReference>
<dbReference type="Pfam" id="PF00926">
    <property type="entry name" value="DHBP_synthase"/>
    <property type="match status" value="1"/>
</dbReference>
<dbReference type="Pfam" id="PF00925">
    <property type="entry name" value="GTP_cyclohydro2"/>
    <property type="match status" value="1"/>
</dbReference>
<dbReference type="PIRSF" id="PIRSF001259">
    <property type="entry name" value="RibA"/>
    <property type="match status" value="1"/>
</dbReference>
<dbReference type="SUPFAM" id="SSF142695">
    <property type="entry name" value="RibA-like"/>
    <property type="match status" value="1"/>
</dbReference>
<dbReference type="SUPFAM" id="SSF55821">
    <property type="entry name" value="YrdC/RibB"/>
    <property type="match status" value="1"/>
</dbReference>
<protein>
    <recommendedName>
        <fullName evidence="1">Riboflavin biosynthesis protein RibBA</fullName>
    </recommendedName>
    <domain>
        <recommendedName>
            <fullName evidence="1">3,4-dihydroxy-2-butanone 4-phosphate synthase</fullName>
            <shortName evidence="1">DHBP synthase</shortName>
            <ecNumber evidence="1">4.1.99.12</ecNumber>
        </recommendedName>
    </domain>
    <domain>
        <recommendedName>
            <fullName evidence="1">GTP cyclohydrolase-2</fullName>
            <ecNumber evidence="1">3.5.4.25</ecNumber>
        </recommendedName>
        <alternativeName>
            <fullName evidence="1">GTP cyclohydrolase II</fullName>
        </alternativeName>
    </domain>
</protein>
<feature type="chain" id="PRO_1000067423" description="Riboflavin biosynthesis protein RibBA">
    <location>
        <begin position="1"/>
        <end position="425"/>
    </location>
</feature>
<feature type="region of interest" description="DHBP synthase">
    <location>
        <begin position="1"/>
        <end position="204"/>
    </location>
</feature>
<feature type="region of interest" description="GTP cyclohydrolase II">
    <location>
        <begin position="205"/>
        <end position="425"/>
    </location>
</feature>
<feature type="active site" description="Proton acceptor; for GTP cyclohydrolase activity" evidence="1">
    <location>
        <position position="337"/>
    </location>
</feature>
<feature type="active site" description="Nucleophile; for GTP cyclohydrolase activity" evidence="1">
    <location>
        <position position="339"/>
    </location>
</feature>
<feature type="binding site" evidence="1">
    <location>
        <begin position="28"/>
        <end position="29"/>
    </location>
    <ligand>
        <name>D-ribulose 5-phosphate</name>
        <dbReference type="ChEBI" id="CHEBI:58121"/>
    </ligand>
</feature>
<feature type="binding site" evidence="1">
    <location>
        <position position="29"/>
    </location>
    <ligand>
        <name>Mg(2+)</name>
        <dbReference type="ChEBI" id="CHEBI:18420"/>
        <label>1</label>
    </ligand>
</feature>
<feature type="binding site" evidence="1">
    <location>
        <position position="29"/>
    </location>
    <ligand>
        <name>Mg(2+)</name>
        <dbReference type="ChEBI" id="CHEBI:18420"/>
        <label>2</label>
    </ligand>
</feature>
<feature type="binding site" evidence="1">
    <location>
        <position position="33"/>
    </location>
    <ligand>
        <name>D-ribulose 5-phosphate</name>
        <dbReference type="ChEBI" id="CHEBI:58121"/>
    </ligand>
</feature>
<feature type="binding site" evidence="1">
    <location>
        <begin position="141"/>
        <end position="145"/>
    </location>
    <ligand>
        <name>D-ribulose 5-phosphate</name>
        <dbReference type="ChEBI" id="CHEBI:58121"/>
    </ligand>
</feature>
<feature type="binding site" evidence="1">
    <location>
        <position position="144"/>
    </location>
    <ligand>
        <name>Mg(2+)</name>
        <dbReference type="ChEBI" id="CHEBI:18420"/>
        <label>2</label>
    </ligand>
</feature>
<feature type="binding site" evidence="1">
    <location>
        <position position="165"/>
    </location>
    <ligand>
        <name>D-ribulose 5-phosphate</name>
        <dbReference type="ChEBI" id="CHEBI:58121"/>
    </ligand>
</feature>
<feature type="binding site" evidence="1">
    <location>
        <begin position="259"/>
        <end position="263"/>
    </location>
    <ligand>
        <name>GTP</name>
        <dbReference type="ChEBI" id="CHEBI:37565"/>
    </ligand>
</feature>
<feature type="binding site" evidence="1">
    <location>
        <position position="264"/>
    </location>
    <ligand>
        <name>Zn(2+)</name>
        <dbReference type="ChEBI" id="CHEBI:29105"/>
        <note>catalytic</note>
    </ligand>
</feature>
<feature type="binding site" evidence="1">
    <location>
        <position position="275"/>
    </location>
    <ligand>
        <name>Zn(2+)</name>
        <dbReference type="ChEBI" id="CHEBI:29105"/>
        <note>catalytic</note>
    </ligand>
</feature>
<feature type="binding site" evidence="1">
    <location>
        <position position="277"/>
    </location>
    <ligand>
        <name>Zn(2+)</name>
        <dbReference type="ChEBI" id="CHEBI:29105"/>
        <note>catalytic</note>
    </ligand>
</feature>
<feature type="binding site" evidence="1">
    <location>
        <position position="280"/>
    </location>
    <ligand>
        <name>GTP</name>
        <dbReference type="ChEBI" id="CHEBI:37565"/>
    </ligand>
</feature>
<feature type="binding site" evidence="1">
    <location>
        <begin position="303"/>
        <end position="305"/>
    </location>
    <ligand>
        <name>GTP</name>
        <dbReference type="ChEBI" id="CHEBI:37565"/>
    </ligand>
</feature>
<feature type="binding site" evidence="1">
    <location>
        <position position="325"/>
    </location>
    <ligand>
        <name>GTP</name>
        <dbReference type="ChEBI" id="CHEBI:37565"/>
    </ligand>
</feature>
<feature type="binding site" evidence="1">
    <location>
        <position position="360"/>
    </location>
    <ligand>
        <name>GTP</name>
        <dbReference type="ChEBI" id="CHEBI:37565"/>
    </ligand>
</feature>
<feature type="binding site" evidence="1">
    <location>
        <position position="365"/>
    </location>
    <ligand>
        <name>GTP</name>
        <dbReference type="ChEBI" id="CHEBI:37565"/>
    </ligand>
</feature>
<feature type="site" description="Essential for DHBP synthase activity" evidence="1">
    <location>
        <position position="127"/>
    </location>
</feature>
<feature type="site" description="Essential for DHBP synthase activity" evidence="1">
    <location>
        <position position="165"/>
    </location>
</feature>
<sequence>MTRLDSVERAVADIAAGKAVIVIDDEDRENEGDLIFAAEKATPEMVAFMVRYTSGYLCVPLDGAICDRLGLLPMYAVNQDKHGTAYTVTVDARNGVGTGISASDRATTMRLLADPTSIAEDFTRPGHVVPLRAKDGGVLRRPGHTEAAVDLARMAGLQPAGAICEIVSQKDEGSMAQTDELRVFADEHDLAMITIADLIEWRRKHEKHIERIAEARIPTRHGEFRAIGYTSIYEEVEHVALVRGEIAGPNSDGDDVLVRVHSECLTGDVFGSRRCDCGPQLDAAMAMVAREGRGIVLYMRGHEGRGIGLMHKLQAYQLQDAGEDTVDANLKLGFPADARDYGIGAQILVDLGVRSMRLLTNNPAKRVGLDGYGLHIIERVPLPVRANAENIRYLMTKRDKMGHDLAGLDDFHESVHLPGEFGGAL</sequence>
<proteinExistence type="inferred from homology"/>
<comment type="function">
    <text evidence="1">Catalyzes the conversion of D-ribulose 5-phosphate to formate and 3,4-dihydroxy-2-butanone 4-phosphate.</text>
</comment>
<comment type="function">
    <text evidence="1">Catalyzes the conversion of GTP to 2,5-diamino-6-ribosylamino-4(3H)-pyrimidinone 5'-phosphate (DARP), formate and pyrophosphate.</text>
</comment>
<comment type="catalytic activity">
    <reaction evidence="1">
        <text>D-ribulose 5-phosphate = (2S)-2-hydroxy-3-oxobutyl phosphate + formate + H(+)</text>
        <dbReference type="Rhea" id="RHEA:18457"/>
        <dbReference type="ChEBI" id="CHEBI:15378"/>
        <dbReference type="ChEBI" id="CHEBI:15740"/>
        <dbReference type="ChEBI" id="CHEBI:58121"/>
        <dbReference type="ChEBI" id="CHEBI:58830"/>
        <dbReference type="EC" id="4.1.99.12"/>
    </reaction>
</comment>
<comment type="catalytic activity">
    <reaction evidence="1">
        <text>GTP + 4 H2O = 2,5-diamino-6-hydroxy-4-(5-phosphoribosylamino)-pyrimidine + formate + 2 phosphate + 3 H(+)</text>
        <dbReference type="Rhea" id="RHEA:23704"/>
        <dbReference type="ChEBI" id="CHEBI:15377"/>
        <dbReference type="ChEBI" id="CHEBI:15378"/>
        <dbReference type="ChEBI" id="CHEBI:15740"/>
        <dbReference type="ChEBI" id="CHEBI:37565"/>
        <dbReference type="ChEBI" id="CHEBI:43474"/>
        <dbReference type="ChEBI" id="CHEBI:58614"/>
        <dbReference type="EC" id="3.5.4.25"/>
    </reaction>
</comment>
<comment type="cofactor">
    <cofactor evidence="1">
        <name>Mg(2+)</name>
        <dbReference type="ChEBI" id="CHEBI:18420"/>
    </cofactor>
    <cofactor evidence="1">
        <name>Mn(2+)</name>
        <dbReference type="ChEBI" id="CHEBI:29035"/>
    </cofactor>
    <text evidence="1">Binds 2 divalent metal cations per subunit. Magnesium or manganese.</text>
</comment>
<comment type="cofactor">
    <cofactor evidence="1">
        <name>Zn(2+)</name>
        <dbReference type="ChEBI" id="CHEBI:29105"/>
    </cofactor>
    <text evidence="1">Binds 1 zinc ion per subunit.</text>
</comment>
<comment type="pathway">
    <text evidence="1">Cofactor biosynthesis; riboflavin biosynthesis; 2-hydroxy-3-oxobutyl phosphate from D-ribulose 5-phosphate: step 1/1.</text>
</comment>
<comment type="pathway">
    <text evidence="1">Cofactor biosynthesis; riboflavin biosynthesis; 5-amino-6-(D-ribitylamino)uracil from GTP: step 1/4.</text>
</comment>
<comment type="similarity">
    <text evidence="1">In the N-terminal section; belongs to the DHBP synthase family.</text>
</comment>
<comment type="similarity">
    <text evidence="1">In the C-terminal section; belongs to the GTP cyclohydrolase II family.</text>
</comment>
<name>RIBBA_MYCA1</name>
<reference key="1">
    <citation type="submission" date="2006-10" db="EMBL/GenBank/DDBJ databases">
        <authorList>
            <person name="Fleischmann R.D."/>
            <person name="Dodson R.J."/>
            <person name="Haft D.H."/>
            <person name="Merkel J.S."/>
            <person name="Nelson W.C."/>
            <person name="Fraser C.M."/>
        </authorList>
    </citation>
    <scope>NUCLEOTIDE SEQUENCE [LARGE SCALE GENOMIC DNA]</scope>
    <source>
        <strain>104</strain>
    </source>
</reference>
<organism>
    <name type="scientific">Mycobacterium avium (strain 104)</name>
    <dbReference type="NCBI Taxonomy" id="243243"/>
    <lineage>
        <taxon>Bacteria</taxon>
        <taxon>Bacillati</taxon>
        <taxon>Actinomycetota</taxon>
        <taxon>Actinomycetes</taxon>
        <taxon>Mycobacteriales</taxon>
        <taxon>Mycobacteriaceae</taxon>
        <taxon>Mycobacterium</taxon>
        <taxon>Mycobacterium avium complex (MAC)</taxon>
    </lineage>
</organism>
<keyword id="KW-0342">GTP-binding</keyword>
<keyword id="KW-0378">Hydrolase</keyword>
<keyword id="KW-0456">Lyase</keyword>
<keyword id="KW-0460">Magnesium</keyword>
<keyword id="KW-0464">Manganese</keyword>
<keyword id="KW-0479">Metal-binding</keyword>
<keyword id="KW-0511">Multifunctional enzyme</keyword>
<keyword id="KW-0547">Nucleotide-binding</keyword>
<keyword id="KW-0686">Riboflavin biosynthesis</keyword>
<keyword id="KW-0862">Zinc</keyword>